<dbReference type="EC" id="1.1.1.25" evidence="1"/>
<dbReference type="EMBL" id="CP001001">
    <property type="protein sequence ID" value="ACB26252.1"/>
    <property type="molecule type" value="Genomic_DNA"/>
</dbReference>
<dbReference type="RefSeq" id="WP_012321206.1">
    <property type="nucleotide sequence ID" value="NC_010505.1"/>
</dbReference>
<dbReference type="SMR" id="B1M3B2"/>
<dbReference type="STRING" id="426355.Mrad2831_4285"/>
<dbReference type="GeneID" id="6140344"/>
<dbReference type="KEGG" id="mrd:Mrad2831_4285"/>
<dbReference type="PATRIC" id="fig|426355.14.peg.4362"/>
<dbReference type="eggNOG" id="COG0169">
    <property type="taxonomic scope" value="Bacteria"/>
</dbReference>
<dbReference type="HOGENOM" id="CLU_044063_2_0_5"/>
<dbReference type="OrthoDB" id="9792692at2"/>
<dbReference type="UniPathway" id="UPA00053">
    <property type="reaction ID" value="UER00087"/>
</dbReference>
<dbReference type="Proteomes" id="UP000006589">
    <property type="component" value="Chromosome"/>
</dbReference>
<dbReference type="GO" id="GO:0005829">
    <property type="term" value="C:cytosol"/>
    <property type="evidence" value="ECO:0007669"/>
    <property type="project" value="TreeGrafter"/>
</dbReference>
<dbReference type="GO" id="GO:0050661">
    <property type="term" value="F:NADP binding"/>
    <property type="evidence" value="ECO:0007669"/>
    <property type="project" value="InterPro"/>
</dbReference>
<dbReference type="GO" id="GO:0004764">
    <property type="term" value="F:shikimate 3-dehydrogenase (NADP+) activity"/>
    <property type="evidence" value="ECO:0007669"/>
    <property type="project" value="UniProtKB-UniRule"/>
</dbReference>
<dbReference type="GO" id="GO:0008652">
    <property type="term" value="P:amino acid biosynthetic process"/>
    <property type="evidence" value="ECO:0007669"/>
    <property type="project" value="UniProtKB-KW"/>
</dbReference>
<dbReference type="GO" id="GO:0009073">
    <property type="term" value="P:aromatic amino acid family biosynthetic process"/>
    <property type="evidence" value="ECO:0007669"/>
    <property type="project" value="UniProtKB-KW"/>
</dbReference>
<dbReference type="GO" id="GO:0009423">
    <property type="term" value="P:chorismate biosynthetic process"/>
    <property type="evidence" value="ECO:0007669"/>
    <property type="project" value="UniProtKB-UniRule"/>
</dbReference>
<dbReference type="GO" id="GO:0019632">
    <property type="term" value="P:shikimate metabolic process"/>
    <property type="evidence" value="ECO:0007669"/>
    <property type="project" value="InterPro"/>
</dbReference>
<dbReference type="CDD" id="cd01065">
    <property type="entry name" value="NAD_bind_Shikimate_DH"/>
    <property type="match status" value="1"/>
</dbReference>
<dbReference type="FunFam" id="3.40.50.10860:FF:000006">
    <property type="entry name" value="Shikimate dehydrogenase (NADP(+))"/>
    <property type="match status" value="1"/>
</dbReference>
<dbReference type="Gene3D" id="3.40.50.10860">
    <property type="entry name" value="Leucine Dehydrogenase, chain A, domain 1"/>
    <property type="match status" value="1"/>
</dbReference>
<dbReference type="Gene3D" id="3.40.50.720">
    <property type="entry name" value="NAD(P)-binding Rossmann-like Domain"/>
    <property type="match status" value="1"/>
</dbReference>
<dbReference type="HAMAP" id="MF_00222">
    <property type="entry name" value="Shikimate_DH_AroE"/>
    <property type="match status" value="1"/>
</dbReference>
<dbReference type="InterPro" id="IPR046346">
    <property type="entry name" value="Aminoacid_DH-like_N_sf"/>
</dbReference>
<dbReference type="InterPro" id="IPR036291">
    <property type="entry name" value="NAD(P)-bd_dom_sf"/>
</dbReference>
<dbReference type="InterPro" id="IPR011342">
    <property type="entry name" value="Shikimate_DH"/>
</dbReference>
<dbReference type="InterPro" id="IPR013708">
    <property type="entry name" value="Shikimate_DH-bd_N"/>
</dbReference>
<dbReference type="InterPro" id="IPR022893">
    <property type="entry name" value="Shikimate_DH_fam"/>
</dbReference>
<dbReference type="InterPro" id="IPR006151">
    <property type="entry name" value="Shikm_DH/Glu-tRNA_Rdtase"/>
</dbReference>
<dbReference type="NCBIfam" id="TIGR00507">
    <property type="entry name" value="aroE"/>
    <property type="match status" value="1"/>
</dbReference>
<dbReference type="NCBIfam" id="NF001312">
    <property type="entry name" value="PRK00258.1-4"/>
    <property type="match status" value="1"/>
</dbReference>
<dbReference type="PANTHER" id="PTHR21089:SF1">
    <property type="entry name" value="BIFUNCTIONAL 3-DEHYDROQUINATE DEHYDRATASE_SHIKIMATE DEHYDROGENASE, CHLOROPLASTIC"/>
    <property type="match status" value="1"/>
</dbReference>
<dbReference type="PANTHER" id="PTHR21089">
    <property type="entry name" value="SHIKIMATE DEHYDROGENASE"/>
    <property type="match status" value="1"/>
</dbReference>
<dbReference type="Pfam" id="PF01488">
    <property type="entry name" value="Shikimate_DH"/>
    <property type="match status" value="1"/>
</dbReference>
<dbReference type="Pfam" id="PF08501">
    <property type="entry name" value="Shikimate_dh_N"/>
    <property type="match status" value="1"/>
</dbReference>
<dbReference type="SUPFAM" id="SSF53223">
    <property type="entry name" value="Aminoacid dehydrogenase-like, N-terminal domain"/>
    <property type="match status" value="1"/>
</dbReference>
<dbReference type="SUPFAM" id="SSF51735">
    <property type="entry name" value="NAD(P)-binding Rossmann-fold domains"/>
    <property type="match status" value="1"/>
</dbReference>
<proteinExistence type="inferred from homology"/>
<comment type="function">
    <text evidence="1">Involved in the biosynthesis of the chorismate, which leads to the biosynthesis of aromatic amino acids. Catalyzes the reversible NADPH linked reduction of 3-dehydroshikimate (DHSA) to yield shikimate (SA).</text>
</comment>
<comment type="catalytic activity">
    <reaction evidence="1">
        <text>shikimate + NADP(+) = 3-dehydroshikimate + NADPH + H(+)</text>
        <dbReference type="Rhea" id="RHEA:17737"/>
        <dbReference type="ChEBI" id="CHEBI:15378"/>
        <dbReference type="ChEBI" id="CHEBI:16630"/>
        <dbReference type="ChEBI" id="CHEBI:36208"/>
        <dbReference type="ChEBI" id="CHEBI:57783"/>
        <dbReference type="ChEBI" id="CHEBI:58349"/>
        <dbReference type="EC" id="1.1.1.25"/>
    </reaction>
</comment>
<comment type="pathway">
    <text evidence="1">Metabolic intermediate biosynthesis; chorismate biosynthesis; chorismate from D-erythrose 4-phosphate and phosphoenolpyruvate: step 4/7.</text>
</comment>
<comment type="subunit">
    <text evidence="1">Homodimer.</text>
</comment>
<comment type="similarity">
    <text evidence="1">Belongs to the shikimate dehydrogenase family.</text>
</comment>
<feature type="chain" id="PRO_1000118879" description="Shikimate dehydrogenase (NADP(+))">
    <location>
        <begin position="1"/>
        <end position="282"/>
    </location>
</feature>
<feature type="active site" description="Proton acceptor" evidence="1">
    <location>
        <position position="69"/>
    </location>
</feature>
<feature type="binding site" evidence="1">
    <location>
        <begin position="18"/>
        <end position="20"/>
    </location>
    <ligand>
        <name>shikimate</name>
        <dbReference type="ChEBI" id="CHEBI:36208"/>
    </ligand>
</feature>
<feature type="binding site" evidence="1">
    <location>
        <position position="65"/>
    </location>
    <ligand>
        <name>shikimate</name>
        <dbReference type="ChEBI" id="CHEBI:36208"/>
    </ligand>
</feature>
<feature type="binding site" evidence="1">
    <location>
        <position position="90"/>
    </location>
    <ligand>
        <name>shikimate</name>
        <dbReference type="ChEBI" id="CHEBI:36208"/>
    </ligand>
</feature>
<feature type="binding site" evidence="1">
    <location>
        <position position="106"/>
    </location>
    <ligand>
        <name>shikimate</name>
        <dbReference type="ChEBI" id="CHEBI:36208"/>
    </ligand>
</feature>
<feature type="binding site" evidence="1">
    <location>
        <begin position="134"/>
        <end position="138"/>
    </location>
    <ligand>
        <name>NADP(+)</name>
        <dbReference type="ChEBI" id="CHEBI:58349"/>
    </ligand>
</feature>
<feature type="binding site" evidence="1">
    <location>
        <begin position="158"/>
        <end position="163"/>
    </location>
    <ligand>
        <name>NADP(+)</name>
        <dbReference type="ChEBI" id="CHEBI:58349"/>
    </ligand>
</feature>
<feature type="binding site" evidence="1">
    <location>
        <position position="223"/>
    </location>
    <ligand>
        <name>NADP(+)</name>
        <dbReference type="ChEBI" id="CHEBI:58349"/>
    </ligand>
</feature>
<feature type="binding site" evidence="1">
    <location>
        <position position="225"/>
    </location>
    <ligand>
        <name>shikimate</name>
        <dbReference type="ChEBI" id="CHEBI:36208"/>
    </ligand>
</feature>
<feature type="binding site" evidence="1">
    <location>
        <position position="246"/>
    </location>
    <ligand>
        <name>NADP(+)</name>
        <dbReference type="ChEBI" id="CHEBI:58349"/>
    </ligand>
</feature>
<name>AROE_METRJ</name>
<evidence type="ECO:0000255" key="1">
    <source>
        <dbReference type="HAMAP-Rule" id="MF_00222"/>
    </source>
</evidence>
<accession>B1M3B2</accession>
<sequence>MSVATPRAFVVGHPIAHSRSPLIHGHWLAVHGIPGSYERLDVPPAAFPDFVRGLPDSGFRGGNVTIPHKEAAFALADTLTPRARAIGAVNTLVVGPDGRIRGDNTDAPGFCAHLDHSLGAAWPERAGGTALVLGAGGAARAVVVGLAERGLRRVWVANRTAARAEAVAALAPGVGAALAWDDLPAALPGTGLLVNTTSLGMKGQPPLAVDLSPLPADAAVADIVYAPLETALLAAARRRGLAAVDGLGMLLHQAVPGFEAWFGPRPRVTPELRDRIVADLAG</sequence>
<gene>
    <name evidence="1" type="primary">aroE</name>
    <name type="ordered locus">Mrad2831_4285</name>
</gene>
<protein>
    <recommendedName>
        <fullName evidence="1">Shikimate dehydrogenase (NADP(+))</fullName>
        <shortName evidence="1">SDH</shortName>
        <ecNumber evidence="1">1.1.1.25</ecNumber>
    </recommendedName>
</protein>
<keyword id="KW-0028">Amino-acid biosynthesis</keyword>
<keyword id="KW-0057">Aromatic amino acid biosynthesis</keyword>
<keyword id="KW-0521">NADP</keyword>
<keyword id="KW-0560">Oxidoreductase</keyword>
<organism>
    <name type="scientific">Methylobacterium radiotolerans (strain ATCC 27329 / DSM 1819 / JCM 2831 / NBRC 15690 / NCIMB 10815 / 0-1)</name>
    <dbReference type="NCBI Taxonomy" id="426355"/>
    <lineage>
        <taxon>Bacteria</taxon>
        <taxon>Pseudomonadati</taxon>
        <taxon>Pseudomonadota</taxon>
        <taxon>Alphaproteobacteria</taxon>
        <taxon>Hyphomicrobiales</taxon>
        <taxon>Methylobacteriaceae</taxon>
        <taxon>Methylobacterium</taxon>
    </lineage>
</organism>
<reference key="1">
    <citation type="submission" date="2008-03" db="EMBL/GenBank/DDBJ databases">
        <title>Complete sequence of chromosome of Methylobacterium radiotolerans JCM 2831.</title>
        <authorList>
            <consortium name="US DOE Joint Genome Institute"/>
            <person name="Copeland A."/>
            <person name="Lucas S."/>
            <person name="Lapidus A."/>
            <person name="Glavina del Rio T."/>
            <person name="Dalin E."/>
            <person name="Tice H."/>
            <person name="Bruce D."/>
            <person name="Goodwin L."/>
            <person name="Pitluck S."/>
            <person name="Kiss H."/>
            <person name="Brettin T."/>
            <person name="Detter J.C."/>
            <person name="Han C."/>
            <person name="Kuske C.R."/>
            <person name="Schmutz J."/>
            <person name="Larimer F."/>
            <person name="Land M."/>
            <person name="Hauser L."/>
            <person name="Kyrpides N."/>
            <person name="Mikhailova N."/>
            <person name="Marx C.J."/>
            <person name="Richardson P."/>
        </authorList>
    </citation>
    <scope>NUCLEOTIDE SEQUENCE [LARGE SCALE GENOMIC DNA]</scope>
    <source>
        <strain>ATCC 27329 / DSM 1819 / JCM 2831 / NBRC 15690 / NCIMB 10815 / 0-1</strain>
    </source>
</reference>